<accession>A9M1U5</accession>
<organism>
    <name type="scientific">Neisseria meningitidis serogroup C (strain 053442)</name>
    <dbReference type="NCBI Taxonomy" id="374833"/>
    <lineage>
        <taxon>Bacteria</taxon>
        <taxon>Pseudomonadati</taxon>
        <taxon>Pseudomonadota</taxon>
        <taxon>Betaproteobacteria</taxon>
        <taxon>Neisseriales</taxon>
        <taxon>Neisseriaceae</taxon>
        <taxon>Neisseria</taxon>
    </lineage>
</organism>
<feature type="chain" id="PRO_1000075953" description="Shikimate kinase">
    <location>
        <begin position="1"/>
        <end position="170"/>
    </location>
</feature>
<feature type="binding site" evidence="1">
    <location>
        <begin position="15"/>
        <end position="20"/>
    </location>
    <ligand>
        <name>ATP</name>
        <dbReference type="ChEBI" id="CHEBI:30616"/>
    </ligand>
</feature>
<feature type="binding site" evidence="1">
    <location>
        <position position="19"/>
    </location>
    <ligand>
        <name>Mg(2+)</name>
        <dbReference type="ChEBI" id="CHEBI:18420"/>
    </ligand>
</feature>
<feature type="binding site" evidence="1">
    <location>
        <position position="37"/>
    </location>
    <ligand>
        <name>substrate</name>
    </ligand>
</feature>
<feature type="binding site" evidence="1">
    <location>
        <position position="61"/>
    </location>
    <ligand>
        <name>substrate</name>
    </ligand>
</feature>
<feature type="binding site" evidence="1">
    <location>
        <position position="83"/>
    </location>
    <ligand>
        <name>substrate</name>
    </ligand>
</feature>
<feature type="binding site" evidence="1">
    <location>
        <position position="121"/>
    </location>
    <ligand>
        <name>ATP</name>
        <dbReference type="ChEBI" id="CHEBI:30616"/>
    </ligand>
</feature>
<feature type="binding site" evidence="1">
    <location>
        <position position="140"/>
    </location>
    <ligand>
        <name>substrate</name>
    </ligand>
</feature>
<protein>
    <recommendedName>
        <fullName evidence="1">Shikimate kinase</fullName>
        <shortName evidence="1">SK</shortName>
        <ecNumber evidence="1">2.7.1.71</ecNumber>
    </recommendedName>
</protein>
<reference key="1">
    <citation type="journal article" date="2008" name="Genomics">
        <title>Characterization of ST-4821 complex, a unique Neisseria meningitidis clone.</title>
        <authorList>
            <person name="Peng J."/>
            <person name="Yang L."/>
            <person name="Yang F."/>
            <person name="Yang J."/>
            <person name="Yan Y."/>
            <person name="Nie H."/>
            <person name="Zhang X."/>
            <person name="Xiong Z."/>
            <person name="Jiang Y."/>
            <person name="Cheng F."/>
            <person name="Xu X."/>
            <person name="Chen S."/>
            <person name="Sun L."/>
            <person name="Li W."/>
            <person name="Shen Y."/>
            <person name="Shao Z."/>
            <person name="Liang X."/>
            <person name="Xu J."/>
            <person name="Jin Q."/>
        </authorList>
    </citation>
    <scope>NUCLEOTIDE SEQUENCE [LARGE SCALE GENOMIC DNA]</scope>
    <source>
        <strain>053442</strain>
    </source>
</reference>
<proteinExistence type="inferred from homology"/>
<sequence length="170" mass="18980">MKNFNGKLILIGLMGAGKTTLGRQMAQRLDYRFYDSDHEIAAAAGVPIPTIFEMEGEQGFRSRETAILKKLVILPHIVLSTGGGAVLKEENRALIRKSGTVVYLHAPPETLLERTRCDNSRPLLQVADPLAKLRELYAARDPVYRQTADFTVESANCRETVQTLLKRLSR</sequence>
<evidence type="ECO:0000255" key="1">
    <source>
        <dbReference type="HAMAP-Rule" id="MF_00109"/>
    </source>
</evidence>
<name>AROK_NEIM0</name>
<gene>
    <name evidence="1" type="primary">aroK</name>
    <name type="ordered locus">NMCC_0415</name>
</gene>
<dbReference type="EC" id="2.7.1.71" evidence="1"/>
<dbReference type="EMBL" id="CP000381">
    <property type="protein sequence ID" value="ABX72620.1"/>
    <property type="molecule type" value="Genomic_DNA"/>
</dbReference>
<dbReference type="RefSeq" id="WP_002222978.1">
    <property type="nucleotide sequence ID" value="NC_010120.1"/>
</dbReference>
<dbReference type="SMR" id="A9M1U5"/>
<dbReference type="KEGG" id="nmn:NMCC_0415"/>
<dbReference type="HOGENOM" id="CLU_057607_2_2_4"/>
<dbReference type="UniPathway" id="UPA00053">
    <property type="reaction ID" value="UER00088"/>
</dbReference>
<dbReference type="Proteomes" id="UP000001177">
    <property type="component" value="Chromosome"/>
</dbReference>
<dbReference type="GO" id="GO:0005829">
    <property type="term" value="C:cytosol"/>
    <property type="evidence" value="ECO:0007669"/>
    <property type="project" value="TreeGrafter"/>
</dbReference>
<dbReference type="GO" id="GO:0005524">
    <property type="term" value="F:ATP binding"/>
    <property type="evidence" value="ECO:0007669"/>
    <property type="project" value="UniProtKB-UniRule"/>
</dbReference>
<dbReference type="GO" id="GO:0000287">
    <property type="term" value="F:magnesium ion binding"/>
    <property type="evidence" value="ECO:0007669"/>
    <property type="project" value="UniProtKB-UniRule"/>
</dbReference>
<dbReference type="GO" id="GO:0004765">
    <property type="term" value="F:shikimate kinase activity"/>
    <property type="evidence" value="ECO:0007669"/>
    <property type="project" value="UniProtKB-UniRule"/>
</dbReference>
<dbReference type="GO" id="GO:0008652">
    <property type="term" value="P:amino acid biosynthetic process"/>
    <property type="evidence" value="ECO:0007669"/>
    <property type="project" value="UniProtKB-KW"/>
</dbReference>
<dbReference type="GO" id="GO:0009073">
    <property type="term" value="P:aromatic amino acid family biosynthetic process"/>
    <property type="evidence" value="ECO:0007669"/>
    <property type="project" value="UniProtKB-KW"/>
</dbReference>
<dbReference type="GO" id="GO:0009423">
    <property type="term" value="P:chorismate biosynthetic process"/>
    <property type="evidence" value="ECO:0007669"/>
    <property type="project" value="UniProtKB-UniRule"/>
</dbReference>
<dbReference type="CDD" id="cd00464">
    <property type="entry name" value="SK"/>
    <property type="match status" value="1"/>
</dbReference>
<dbReference type="FunFam" id="3.40.50.300:FF:002237">
    <property type="entry name" value="Shikimate kinase"/>
    <property type="match status" value="1"/>
</dbReference>
<dbReference type="Gene3D" id="3.40.50.300">
    <property type="entry name" value="P-loop containing nucleotide triphosphate hydrolases"/>
    <property type="match status" value="1"/>
</dbReference>
<dbReference type="HAMAP" id="MF_00109">
    <property type="entry name" value="Shikimate_kinase"/>
    <property type="match status" value="1"/>
</dbReference>
<dbReference type="InterPro" id="IPR027417">
    <property type="entry name" value="P-loop_NTPase"/>
</dbReference>
<dbReference type="InterPro" id="IPR031322">
    <property type="entry name" value="Shikimate/glucono_kinase"/>
</dbReference>
<dbReference type="InterPro" id="IPR000623">
    <property type="entry name" value="Shikimate_kinase/TSH1"/>
</dbReference>
<dbReference type="InterPro" id="IPR023000">
    <property type="entry name" value="Shikimate_kinase_CS"/>
</dbReference>
<dbReference type="PANTHER" id="PTHR21087">
    <property type="entry name" value="SHIKIMATE KINASE"/>
    <property type="match status" value="1"/>
</dbReference>
<dbReference type="PANTHER" id="PTHR21087:SF16">
    <property type="entry name" value="SHIKIMATE KINASE 1, CHLOROPLASTIC"/>
    <property type="match status" value="1"/>
</dbReference>
<dbReference type="Pfam" id="PF01202">
    <property type="entry name" value="SKI"/>
    <property type="match status" value="1"/>
</dbReference>
<dbReference type="PRINTS" id="PR01100">
    <property type="entry name" value="SHIKIMTKNASE"/>
</dbReference>
<dbReference type="SUPFAM" id="SSF52540">
    <property type="entry name" value="P-loop containing nucleoside triphosphate hydrolases"/>
    <property type="match status" value="1"/>
</dbReference>
<dbReference type="PROSITE" id="PS01128">
    <property type="entry name" value="SHIKIMATE_KINASE"/>
    <property type="match status" value="1"/>
</dbReference>
<comment type="function">
    <text evidence="1">Catalyzes the specific phosphorylation of the 3-hydroxyl group of shikimic acid using ATP as a cosubstrate.</text>
</comment>
<comment type="catalytic activity">
    <reaction evidence="1">
        <text>shikimate + ATP = 3-phosphoshikimate + ADP + H(+)</text>
        <dbReference type="Rhea" id="RHEA:13121"/>
        <dbReference type="ChEBI" id="CHEBI:15378"/>
        <dbReference type="ChEBI" id="CHEBI:30616"/>
        <dbReference type="ChEBI" id="CHEBI:36208"/>
        <dbReference type="ChEBI" id="CHEBI:145989"/>
        <dbReference type="ChEBI" id="CHEBI:456216"/>
        <dbReference type="EC" id="2.7.1.71"/>
    </reaction>
</comment>
<comment type="cofactor">
    <cofactor evidence="1">
        <name>Mg(2+)</name>
        <dbReference type="ChEBI" id="CHEBI:18420"/>
    </cofactor>
    <text evidence="1">Binds 1 Mg(2+) ion per subunit.</text>
</comment>
<comment type="pathway">
    <text evidence="1">Metabolic intermediate biosynthesis; chorismate biosynthesis; chorismate from D-erythrose 4-phosphate and phosphoenolpyruvate: step 5/7.</text>
</comment>
<comment type="subunit">
    <text evidence="1">Monomer.</text>
</comment>
<comment type="subcellular location">
    <subcellularLocation>
        <location evidence="1">Cytoplasm</location>
    </subcellularLocation>
</comment>
<comment type="similarity">
    <text evidence="1">Belongs to the shikimate kinase family.</text>
</comment>
<keyword id="KW-0028">Amino-acid biosynthesis</keyword>
<keyword id="KW-0057">Aromatic amino acid biosynthesis</keyword>
<keyword id="KW-0067">ATP-binding</keyword>
<keyword id="KW-0963">Cytoplasm</keyword>
<keyword id="KW-0418">Kinase</keyword>
<keyword id="KW-0460">Magnesium</keyword>
<keyword id="KW-0479">Metal-binding</keyword>
<keyword id="KW-0547">Nucleotide-binding</keyword>
<keyword id="KW-0808">Transferase</keyword>